<comment type="function">
    <text evidence="3">Ion channel involved in potassium tellurite resistance.</text>
</comment>
<comment type="subunit">
    <text evidence="2">Homotrimer. Each subunit forms a channel.</text>
</comment>
<comment type="interaction">
    <interactant intactId="EBI-15888134">
        <id>P44741</id>
    </interactant>
    <interactant intactId="EBI-15888134">
        <id>P44741</id>
        <label>tehA</label>
    </interactant>
    <organismsDiffer>false</organismsDiffer>
    <experiments>4</experiments>
</comment>
<comment type="subcellular location">
    <subcellularLocation>
        <location evidence="1">Cell inner membrane</location>
        <topology evidence="1">Multi-pass membrane protein</topology>
    </subcellularLocation>
</comment>
<comment type="similarity">
    <text evidence="3">Belongs to the tellurite-resistance/dicarboxylate transporter (TDT) family.</text>
</comment>
<protein>
    <recommendedName>
        <fullName>Tellurite resistance protein TehA homolog</fullName>
    </recommendedName>
</protein>
<name>TEHA_HAEIN</name>
<feature type="chain" id="PRO_0000072480" description="Tellurite resistance protein TehA homolog">
    <location>
        <begin position="1"/>
        <end position="328"/>
    </location>
</feature>
<feature type="topological domain" description="Cytoplasmic" evidence="3">
    <location>
        <begin position="1"/>
        <end position="21"/>
    </location>
</feature>
<feature type="transmembrane region" description="Helical">
    <location>
        <begin position="22"/>
        <end position="42"/>
    </location>
</feature>
<feature type="topological domain" description="Periplasmic" evidence="3">
    <location>
        <begin position="43"/>
        <end position="49"/>
    </location>
</feature>
<feature type="transmembrane region" description="Helical">
    <location>
        <begin position="50"/>
        <end position="73"/>
    </location>
</feature>
<feature type="topological domain" description="Cytoplasmic" evidence="3">
    <location>
        <begin position="74"/>
        <end position="93"/>
    </location>
</feature>
<feature type="transmembrane region" description="Helical">
    <location>
        <begin position="94"/>
        <end position="112"/>
    </location>
</feature>
<feature type="topological domain" description="Periplasmic" evidence="3">
    <location>
        <begin position="113"/>
        <end position="115"/>
    </location>
</feature>
<feature type="transmembrane region" description="Helical">
    <location>
        <begin position="116"/>
        <end position="141"/>
    </location>
</feature>
<feature type="topological domain" description="Cytoplasmic" evidence="3">
    <location>
        <begin position="142"/>
        <end position="153"/>
    </location>
</feature>
<feature type="transmembrane region" description="Helical">
    <location>
        <begin position="154"/>
        <end position="174"/>
    </location>
</feature>
<feature type="topological domain" description="Periplasmic" evidence="3">
    <location>
        <begin position="175"/>
        <end position="176"/>
    </location>
</feature>
<feature type="transmembrane region" description="Helical">
    <location>
        <begin position="177"/>
        <end position="204"/>
    </location>
</feature>
<feature type="topological domain" description="Cytoplasmic" evidence="3">
    <location>
        <begin position="205"/>
        <end position="208"/>
    </location>
</feature>
<feature type="transmembrane region" description="Helical">
    <location>
        <begin position="209"/>
        <end position="232"/>
    </location>
</feature>
<feature type="topological domain" description="Periplasmic" evidence="3">
    <location>
        <begin position="233"/>
        <end position="238"/>
    </location>
</feature>
<feature type="transmembrane region" description="Helical">
    <location>
        <begin position="239"/>
        <end position="262"/>
    </location>
</feature>
<feature type="topological domain" description="Cytoplasmic" evidence="3">
    <location>
        <begin position="263"/>
        <end position="268"/>
    </location>
</feature>
<feature type="transmembrane region" description="Helical">
    <location>
        <begin position="269"/>
        <end position="289"/>
    </location>
</feature>
<feature type="topological domain" description="Periplasmic" evidence="3">
    <location>
        <begin position="290"/>
        <end position="294"/>
    </location>
</feature>
<feature type="transmembrane region" description="Helical">
    <location>
        <begin position="295"/>
        <end position="321"/>
    </location>
</feature>
<feature type="topological domain" description="Cytoplasmic" evidence="3">
    <location>
        <begin position="322"/>
        <end position="328"/>
    </location>
</feature>
<feature type="site" description="Important for gating; obstructs channel and prevents ion flux in the closed conformation">
    <location>
        <position position="276"/>
    </location>
</feature>
<feature type="mutagenesis site" description="Blocks channel. Abolishes ion flux; when associated with A-276." evidence="2">
    <original>G</original>
    <variation>D</variation>
    <location>
        <position position="29"/>
    </location>
</feature>
<feature type="mutagenesis site" description="Constitutively open channel. Abolishes ion flux; when associated with D-29." evidence="2">
    <original>F</original>
    <variation>A</variation>
    <variation>G</variation>
    <location>
        <position position="276"/>
    </location>
</feature>
<feature type="mutagenesis site" description="No ion flux while channel is in closed conformation." evidence="2">
    <original>F</original>
    <variation>L</variation>
    <variation>V</variation>
    <location>
        <position position="276"/>
    </location>
</feature>
<feature type="mutagenesis site" description="Small constitutive ion flux." evidence="2">
    <original>F</original>
    <variation>T</variation>
    <location>
        <position position="276"/>
    </location>
</feature>
<feature type="helix" evidence="4">
    <location>
        <begin position="25"/>
        <end position="28"/>
    </location>
</feature>
<feature type="helix" evidence="4">
    <location>
        <begin position="29"/>
        <end position="42"/>
    </location>
</feature>
<feature type="turn" evidence="4">
    <location>
        <begin position="43"/>
        <end position="47"/>
    </location>
</feature>
<feature type="helix" evidence="4">
    <location>
        <begin position="51"/>
        <end position="79"/>
    </location>
</feature>
<feature type="helix" evidence="4">
    <location>
        <begin position="81"/>
        <end position="89"/>
    </location>
</feature>
<feature type="helix" evidence="4">
    <location>
        <begin position="93"/>
        <end position="98"/>
    </location>
</feature>
<feature type="helix" evidence="4">
    <location>
        <begin position="99"/>
        <end position="111"/>
    </location>
</feature>
<feature type="turn" evidence="4">
    <location>
        <begin position="112"/>
        <end position="114"/>
    </location>
</feature>
<feature type="helix" evidence="4">
    <location>
        <begin position="116"/>
        <end position="137"/>
    </location>
</feature>
<feature type="helix" evidence="4">
    <location>
        <begin position="139"/>
        <end position="143"/>
    </location>
</feature>
<feature type="strand" evidence="4">
    <location>
        <begin position="145"/>
        <end position="147"/>
    </location>
</feature>
<feature type="helix" evidence="4">
    <location>
        <begin position="149"/>
        <end position="151"/>
    </location>
</feature>
<feature type="helix" evidence="4">
    <location>
        <begin position="154"/>
        <end position="156"/>
    </location>
</feature>
<feature type="helix" evidence="4">
    <location>
        <begin position="157"/>
        <end position="160"/>
    </location>
</feature>
<feature type="helix" evidence="4">
    <location>
        <begin position="162"/>
        <end position="173"/>
    </location>
</feature>
<feature type="helix" evidence="4">
    <location>
        <begin position="177"/>
        <end position="204"/>
    </location>
</feature>
<feature type="helix" evidence="4">
    <location>
        <begin position="209"/>
        <end position="212"/>
    </location>
</feature>
<feature type="helix" evidence="4">
    <location>
        <begin position="213"/>
        <end position="219"/>
    </location>
</feature>
<feature type="helix" evidence="4">
    <location>
        <begin position="220"/>
        <end position="232"/>
    </location>
</feature>
<feature type="turn" evidence="4">
    <location>
        <begin position="233"/>
        <end position="235"/>
    </location>
</feature>
<feature type="helix" evidence="4">
    <location>
        <begin position="239"/>
        <end position="262"/>
    </location>
</feature>
<feature type="turn" evidence="4">
    <location>
        <begin position="263"/>
        <end position="265"/>
    </location>
</feature>
<feature type="helix" evidence="4">
    <location>
        <begin position="269"/>
        <end position="274"/>
    </location>
</feature>
<feature type="helix" evidence="4">
    <location>
        <begin position="275"/>
        <end position="290"/>
    </location>
</feature>
<feature type="helix" evidence="4">
    <location>
        <begin position="295"/>
        <end position="321"/>
    </location>
</feature>
<accession>P44741</accession>
<keyword id="KW-0002">3D-structure</keyword>
<keyword id="KW-0046">Antibiotic resistance</keyword>
<keyword id="KW-0997">Cell inner membrane</keyword>
<keyword id="KW-1003">Cell membrane</keyword>
<keyword id="KW-0407">Ion channel</keyword>
<keyword id="KW-0406">Ion transport</keyword>
<keyword id="KW-0472">Membrane</keyword>
<keyword id="KW-1185">Reference proteome</keyword>
<keyword id="KW-0778">Tellurium resistance</keyword>
<keyword id="KW-0812">Transmembrane</keyword>
<keyword id="KW-1133">Transmembrane helix</keyword>
<keyword id="KW-0813">Transport</keyword>
<proteinExistence type="evidence at protein level"/>
<sequence length="328" mass="36934">MLHFAHIFQNKVHTMNITKPFPLPTGYFGIPLGLAALSLAWFHLENLFPAARMVSDVLGIVASAVWILFILMYAYKLRYYFEEVRAEYHSPVRFSFIALIPITTMLVGDILYRWNPLIAEVLIWIGTIGQLLFSTLRVSELWQGGVFEQKSTHPSFYLPAVAANFTSASSLALLGYHDLGYLFFGAGMIAWIIFEPVLLQHLRISSLEPQFRATMGIVLAPAFVCVSAYLSINHGEVDTLAKILWGYGFLQLFFLLRLFPWIVEKGLNIGLWAFSFGLASMANSATAFYHGNVLQGVSIFAFVFSNVMIGLLVLMTIYKLTKGQFFLK</sequence>
<organism>
    <name type="scientific">Haemophilus influenzae (strain ATCC 51907 / DSM 11121 / KW20 / Rd)</name>
    <dbReference type="NCBI Taxonomy" id="71421"/>
    <lineage>
        <taxon>Bacteria</taxon>
        <taxon>Pseudomonadati</taxon>
        <taxon>Pseudomonadota</taxon>
        <taxon>Gammaproteobacteria</taxon>
        <taxon>Pasteurellales</taxon>
        <taxon>Pasteurellaceae</taxon>
        <taxon>Haemophilus</taxon>
    </lineage>
</organism>
<reference key="1">
    <citation type="journal article" date="1995" name="Science">
        <title>Whole-genome random sequencing and assembly of Haemophilus influenzae Rd.</title>
        <authorList>
            <person name="Fleischmann R.D."/>
            <person name="Adams M.D."/>
            <person name="White O."/>
            <person name="Clayton R.A."/>
            <person name="Kirkness E.F."/>
            <person name="Kerlavage A.R."/>
            <person name="Bult C.J."/>
            <person name="Tomb J.-F."/>
            <person name="Dougherty B.A."/>
            <person name="Merrick J.M."/>
            <person name="McKenney K."/>
            <person name="Sutton G.G."/>
            <person name="FitzHugh W."/>
            <person name="Fields C.A."/>
            <person name="Gocayne J.D."/>
            <person name="Scott J.D."/>
            <person name="Shirley R."/>
            <person name="Liu L.-I."/>
            <person name="Glodek A."/>
            <person name="Kelley J.M."/>
            <person name="Weidman J.F."/>
            <person name="Phillips C.A."/>
            <person name="Spriggs T."/>
            <person name="Hedblom E."/>
            <person name="Cotton M.D."/>
            <person name="Utterback T.R."/>
            <person name="Hanna M.C."/>
            <person name="Nguyen D.T."/>
            <person name="Saudek D.M."/>
            <person name="Brandon R.C."/>
            <person name="Fine L.D."/>
            <person name="Fritchman J.L."/>
            <person name="Fuhrmann J.L."/>
            <person name="Geoghagen N.S.M."/>
            <person name="Gnehm C.L."/>
            <person name="McDonald L.A."/>
            <person name="Small K.V."/>
            <person name="Fraser C.M."/>
            <person name="Smith H.O."/>
            <person name="Venter J.C."/>
        </authorList>
    </citation>
    <scope>NUCLEOTIDE SEQUENCE [LARGE SCALE GENOMIC DNA]</scope>
    <source>
        <strain>ATCC 51907 / DSM 11121 / KW20 / Rd</strain>
    </source>
</reference>
<reference key="2">
    <citation type="journal article" date="2010" name="Nature">
        <title>Homologue structure of the SLAC1 anion channel for closing stomata in leaves.</title>
        <authorList>
            <person name="Chen Y.H."/>
            <person name="Hu L."/>
            <person name="Punta M."/>
            <person name="Bruni R."/>
            <person name="Hillerich B."/>
            <person name="Kloss B."/>
            <person name="Rost B."/>
            <person name="Love J."/>
            <person name="Siegelbaum S.A."/>
            <person name="Hendrickson W.A."/>
        </authorList>
    </citation>
    <scope>X-RAY CRYSTALLOGRAPHY (1.15 ANGSTROMS) OF 15-328</scope>
    <scope>SUBUNIT</scope>
    <scope>SUBCELLULAR LOCATION</scope>
    <scope>TRANSMEMBRANE TOPOLOGY</scope>
    <scope>MUTAGENESIS OF GLY-29 AND PHE-276</scope>
</reference>
<gene>
    <name type="primary">tehA</name>
    <name type="ordered locus">HI_0511</name>
</gene>
<dbReference type="EMBL" id="L42023">
    <property type="protein sequence ID" value="AAC22169.1"/>
    <property type="molecule type" value="Genomic_DNA"/>
</dbReference>
<dbReference type="PIR" id="D64073">
    <property type="entry name" value="D64073"/>
</dbReference>
<dbReference type="RefSeq" id="NP_438669.1">
    <property type="nucleotide sequence ID" value="NC_000907.1"/>
</dbReference>
<dbReference type="PDB" id="3M71">
    <property type="method" value="X-ray"/>
    <property type="resolution" value="1.20 A"/>
    <property type="chains" value="A=15-328"/>
</dbReference>
<dbReference type="PDB" id="3M72">
    <property type="method" value="X-ray"/>
    <property type="resolution" value="1.70 A"/>
    <property type="chains" value="A=15-328"/>
</dbReference>
<dbReference type="PDB" id="3M73">
    <property type="method" value="X-ray"/>
    <property type="resolution" value="1.15 A"/>
    <property type="chains" value="A=15-328"/>
</dbReference>
<dbReference type="PDB" id="3M74">
    <property type="method" value="X-ray"/>
    <property type="resolution" value="1.65 A"/>
    <property type="chains" value="A=15-328"/>
</dbReference>
<dbReference type="PDB" id="3M75">
    <property type="method" value="X-ray"/>
    <property type="resolution" value="1.60 A"/>
    <property type="chains" value="A=15-328"/>
</dbReference>
<dbReference type="PDB" id="3M76">
    <property type="method" value="X-ray"/>
    <property type="resolution" value="1.50 A"/>
    <property type="chains" value="A=15-328"/>
</dbReference>
<dbReference type="PDB" id="3M77">
    <property type="method" value="X-ray"/>
    <property type="resolution" value="1.50 A"/>
    <property type="chains" value="A=15-328"/>
</dbReference>
<dbReference type="PDB" id="3M78">
    <property type="method" value="X-ray"/>
    <property type="resolution" value="2.60 A"/>
    <property type="chains" value="A=15-328"/>
</dbReference>
<dbReference type="PDB" id="3M7B">
    <property type="method" value="X-ray"/>
    <property type="resolution" value="1.50 A"/>
    <property type="chains" value="A=15-328"/>
</dbReference>
<dbReference type="PDB" id="3M7C">
    <property type="method" value="X-ray"/>
    <property type="resolution" value="1.70 A"/>
    <property type="chains" value="A=15-328"/>
</dbReference>
<dbReference type="PDB" id="3M7E">
    <property type="method" value="X-ray"/>
    <property type="resolution" value="1.80 A"/>
    <property type="chains" value="A=15-328"/>
</dbReference>
<dbReference type="PDB" id="3M7L">
    <property type="method" value="X-ray"/>
    <property type="resolution" value="1.50 A"/>
    <property type="chains" value="A=15-328"/>
</dbReference>
<dbReference type="PDB" id="4YCR">
    <property type="method" value="X-ray"/>
    <property type="resolution" value="2.30 A"/>
    <property type="chains" value="A=22-320"/>
</dbReference>
<dbReference type="PDB" id="8EN9">
    <property type="method" value="X-ray"/>
    <property type="resolution" value="2.60 A"/>
    <property type="chains" value="A=15-328"/>
</dbReference>
<dbReference type="PDB" id="8VI2">
    <property type="method" value="EM"/>
    <property type="resolution" value="3.10 A"/>
    <property type="chains" value="A/B/C=15-328"/>
</dbReference>
<dbReference type="PDB" id="8VI3">
    <property type="method" value="EM"/>
    <property type="resolution" value="2.90 A"/>
    <property type="chains" value="A/B/C=15-328"/>
</dbReference>
<dbReference type="PDB" id="8VI4">
    <property type="method" value="EM"/>
    <property type="resolution" value="3.10 A"/>
    <property type="chains" value="A/B/C=15-328"/>
</dbReference>
<dbReference type="PDB" id="8VI5">
    <property type="method" value="EM"/>
    <property type="resolution" value="3.20 A"/>
    <property type="chains" value="A/B/C=15-328"/>
</dbReference>
<dbReference type="PDBsum" id="3M71"/>
<dbReference type="PDBsum" id="3M72"/>
<dbReference type="PDBsum" id="3M73"/>
<dbReference type="PDBsum" id="3M74"/>
<dbReference type="PDBsum" id="3M75"/>
<dbReference type="PDBsum" id="3M76"/>
<dbReference type="PDBsum" id="3M77"/>
<dbReference type="PDBsum" id="3M78"/>
<dbReference type="PDBsum" id="3M7B"/>
<dbReference type="PDBsum" id="3M7C"/>
<dbReference type="PDBsum" id="3M7E"/>
<dbReference type="PDBsum" id="3M7L"/>
<dbReference type="PDBsum" id="4YCR"/>
<dbReference type="PDBsum" id="8EN9"/>
<dbReference type="PDBsum" id="8VI2"/>
<dbReference type="PDBsum" id="8VI3"/>
<dbReference type="PDBsum" id="8VI4"/>
<dbReference type="PDBsum" id="8VI5"/>
<dbReference type="EMDB" id="EMD-43246"/>
<dbReference type="EMDB" id="EMD-43247"/>
<dbReference type="EMDB" id="EMD-43248"/>
<dbReference type="EMDB" id="EMD-43249"/>
<dbReference type="SMR" id="P44741"/>
<dbReference type="DIP" id="DIP-59222N"/>
<dbReference type="STRING" id="71421.HI_0511"/>
<dbReference type="TCDB" id="2.A.16.1.2">
    <property type="family name" value="the telurite-resistance/dicarboxylate transporter (tdt) family"/>
</dbReference>
<dbReference type="DNASU" id="950588"/>
<dbReference type="EnsemblBacteria" id="AAC22169">
    <property type="protein sequence ID" value="AAC22169"/>
    <property type="gene ID" value="HI_0511"/>
</dbReference>
<dbReference type="KEGG" id="hin:HI_0511"/>
<dbReference type="PATRIC" id="fig|71421.8.peg.530"/>
<dbReference type="eggNOG" id="COG1275">
    <property type="taxonomic scope" value="Bacteria"/>
</dbReference>
<dbReference type="HOGENOM" id="CLU_044414_1_0_6"/>
<dbReference type="OrthoDB" id="309023at2"/>
<dbReference type="PhylomeDB" id="P44741"/>
<dbReference type="BioCyc" id="HINF71421:G1GJ1-524-MONOMER"/>
<dbReference type="EvolutionaryTrace" id="P44741"/>
<dbReference type="Proteomes" id="UP000000579">
    <property type="component" value="Chromosome"/>
</dbReference>
<dbReference type="GO" id="GO:0005886">
    <property type="term" value="C:plasma membrane"/>
    <property type="evidence" value="ECO:0000318"/>
    <property type="project" value="GO_Central"/>
</dbReference>
<dbReference type="GO" id="GO:0042802">
    <property type="term" value="F:identical protein binding"/>
    <property type="evidence" value="ECO:0000353"/>
    <property type="project" value="IntAct"/>
</dbReference>
<dbReference type="GO" id="GO:0046583">
    <property type="term" value="F:monoatomic cation efflux transmembrane transporter activity"/>
    <property type="evidence" value="ECO:0000318"/>
    <property type="project" value="GO_Central"/>
</dbReference>
<dbReference type="GO" id="GO:0046677">
    <property type="term" value="P:response to antibiotic"/>
    <property type="evidence" value="ECO:0007669"/>
    <property type="project" value="UniProtKB-KW"/>
</dbReference>
<dbReference type="GO" id="GO:0046690">
    <property type="term" value="P:response to tellurium ion"/>
    <property type="evidence" value="ECO:0007669"/>
    <property type="project" value="UniProtKB-KW"/>
</dbReference>
<dbReference type="CDD" id="cd09324">
    <property type="entry name" value="TDT_TehA"/>
    <property type="match status" value="1"/>
</dbReference>
<dbReference type="FunFam" id="1.50.10.150:FF:000002">
    <property type="entry name" value="Tellurite resistance protein TehA"/>
    <property type="match status" value="1"/>
</dbReference>
<dbReference type="Gene3D" id="1.50.10.150">
    <property type="entry name" value="Voltage-dependent anion channel"/>
    <property type="match status" value="1"/>
</dbReference>
<dbReference type="InterPro" id="IPR004695">
    <property type="entry name" value="SLAC1/Mae1/Ssu1/TehA"/>
</dbReference>
<dbReference type="InterPro" id="IPR039264">
    <property type="entry name" value="TehA"/>
</dbReference>
<dbReference type="InterPro" id="IPR011552">
    <property type="entry name" value="TehA/Mae1"/>
</dbReference>
<dbReference type="InterPro" id="IPR052951">
    <property type="entry name" value="Tellurite_res_ion_channel"/>
</dbReference>
<dbReference type="InterPro" id="IPR038665">
    <property type="entry name" value="Voltage-dep_anion_channel_sf"/>
</dbReference>
<dbReference type="NCBIfam" id="NF008032">
    <property type="entry name" value="PRK10764.1"/>
    <property type="match status" value="1"/>
</dbReference>
<dbReference type="NCBIfam" id="TIGR00816">
    <property type="entry name" value="tdt"/>
    <property type="match status" value="1"/>
</dbReference>
<dbReference type="PANTHER" id="PTHR37955:SF1">
    <property type="entry name" value="DEP DOMAIN-CONTAINING PROTEIN"/>
    <property type="match status" value="1"/>
</dbReference>
<dbReference type="PANTHER" id="PTHR37955">
    <property type="entry name" value="TELLURITE RESISTANCE PROTEIN TEHA"/>
    <property type="match status" value="1"/>
</dbReference>
<dbReference type="Pfam" id="PF03595">
    <property type="entry name" value="SLAC1"/>
    <property type="match status" value="1"/>
</dbReference>
<evidence type="ECO:0000250" key="1"/>
<evidence type="ECO:0000269" key="2">
    <source>
    </source>
</evidence>
<evidence type="ECO:0000305" key="3"/>
<evidence type="ECO:0007829" key="4">
    <source>
        <dbReference type="PDB" id="3M73"/>
    </source>
</evidence>